<proteinExistence type="inferred from homology"/>
<gene>
    <name evidence="1" type="primary">rplC</name>
    <name type="ordered locus">BCQ_0123</name>
</gene>
<keyword id="KW-0687">Ribonucleoprotein</keyword>
<keyword id="KW-0689">Ribosomal protein</keyword>
<keyword id="KW-0694">RNA-binding</keyword>
<keyword id="KW-0699">rRNA-binding</keyword>
<accession>B9IZJ4</accession>
<sequence>MTKGILGRKIGMTQVFAENGELIPVTVIAANPNVVLQKKTTETDGYNAIQLGFEDKREKLTNKPEQGHTAKASTTPKRFIREIRDADVDGLEVGQEVKVDVFATGEIVDVTGISKGKGFQGVIKRHGQSRGPMSHGSRYHRRPGSMGPVAPNRVFKGKKLAGRMGGDQVTIQNLEIVQVDTERNLLLVKGNVPGAKKSLVVVQGAVKVSK</sequence>
<evidence type="ECO:0000255" key="1">
    <source>
        <dbReference type="HAMAP-Rule" id="MF_01325"/>
    </source>
</evidence>
<evidence type="ECO:0000256" key="2">
    <source>
        <dbReference type="SAM" id="MobiDB-lite"/>
    </source>
</evidence>
<evidence type="ECO:0000305" key="3"/>
<protein>
    <recommendedName>
        <fullName evidence="1">Large ribosomal subunit protein uL3</fullName>
    </recommendedName>
    <alternativeName>
        <fullName evidence="3">50S ribosomal protein L3</fullName>
    </alternativeName>
</protein>
<comment type="function">
    <text evidence="1">One of the primary rRNA binding proteins, it binds directly near the 3'-end of the 23S rRNA, where it nucleates assembly of the 50S subunit.</text>
</comment>
<comment type="subunit">
    <text evidence="1">Part of the 50S ribosomal subunit. Forms a cluster with proteins L14 and L19.</text>
</comment>
<comment type="similarity">
    <text evidence="1">Belongs to the universal ribosomal protein uL3 family.</text>
</comment>
<organism>
    <name type="scientific">Bacillus cereus (strain Q1)</name>
    <dbReference type="NCBI Taxonomy" id="361100"/>
    <lineage>
        <taxon>Bacteria</taxon>
        <taxon>Bacillati</taxon>
        <taxon>Bacillota</taxon>
        <taxon>Bacilli</taxon>
        <taxon>Bacillales</taxon>
        <taxon>Bacillaceae</taxon>
        <taxon>Bacillus</taxon>
        <taxon>Bacillus cereus group</taxon>
    </lineage>
</organism>
<reference key="1">
    <citation type="journal article" date="2009" name="J. Bacteriol.">
        <title>Complete genome sequence of the extremophilic Bacillus cereus strain Q1 with industrial applications.</title>
        <authorList>
            <person name="Xiong Z."/>
            <person name="Jiang Y."/>
            <person name="Qi D."/>
            <person name="Lu H."/>
            <person name="Yang F."/>
            <person name="Yang J."/>
            <person name="Chen L."/>
            <person name="Sun L."/>
            <person name="Xu X."/>
            <person name="Xue Y."/>
            <person name="Zhu Y."/>
            <person name="Jin Q."/>
        </authorList>
    </citation>
    <scope>NUCLEOTIDE SEQUENCE [LARGE SCALE GENOMIC DNA]</scope>
    <source>
        <strain>Q1</strain>
    </source>
</reference>
<dbReference type="EMBL" id="CP000227">
    <property type="protein sequence ID" value="ACM10638.1"/>
    <property type="molecule type" value="Genomic_DNA"/>
</dbReference>
<dbReference type="SMR" id="B9IZJ4"/>
<dbReference type="KEGG" id="bcq:BCQ_0123"/>
<dbReference type="HOGENOM" id="CLU_044142_4_1_9"/>
<dbReference type="Proteomes" id="UP000000441">
    <property type="component" value="Chromosome"/>
</dbReference>
<dbReference type="GO" id="GO:0022625">
    <property type="term" value="C:cytosolic large ribosomal subunit"/>
    <property type="evidence" value="ECO:0007669"/>
    <property type="project" value="TreeGrafter"/>
</dbReference>
<dbReference type="GO" id="GO:0019843">
    <property type="term" value="F:rRNA binding"/>
    <property type="evidence" value="ECO:0007669"/>
    <property type="project" value="UniProtKB-UniRule"/>
</dbReference>
<dbReference type="GO" id="GO:0003735">
    <property type="term" value="F:structural constituent of ribosome"/>
    <property type="evidence" value="ECO:0007669"/>
    <property type="project" value="InterPro"/>
</dbReference>
<dbReference type="GO" id="GO:0006412">
    <property type="term" value="P:translation"/>
    <property type="evidence" value="ECO:0007669"/>
    <property type="project" value="UniProtKB-UniRule"/>
</dbReference>
<dbReference type="FunFam" id="2.40.30.10:FF:000004">
    <property type="entry name" value="50S ribosomal protein L3"/>
    <property type="match status" value="1"/>
</dbReference>
<dbReference type="FunFam" id="3.30.160.810:FF:000002">
    <property type="entry name" value="50S ribosomal protein L3"/>
    <property type="match status" value="1"/>
</dbReference>
<dbReference type="Gene3D" id="3.30.160.810">
    <property type="match status" value="1"/>
</dbReference>
<dbReference type="Gene3D" id="2.40.30.10">
    <property type="entry name" value="Translation factors"/>
    <property type="match status" value="1"/>
</dbReference>
<dbReference type="HAMAP" id="MF_01325_B">
    <property type="entry name" value="Ribosomal_uL3_B"/>
    <property type="match status" value="1"/>
</dbReference>
<dbReference type="InterPro" id="IPR000597">
    <property type="entry name" value="Ribosomal_uL3"/>
</dbReference>
<dbReference type="InterPro" id="IPR019927">
    <property type="entry name" value="Ribosomal_uL3_bac/org-type"/>
</dbReference>
<dbReference type="InterPro" id="IPR019926">
    <property type="entry name" value="Ribosomal_uL3_CS"/>
</dbReference>
<dbReference type="InterPro" id="IPR009000">
    <property type="entry name" value="Transl_B-barrel_sf"/>
</dbReference>
<dbReference type="NCBIfam" id="TIGR03625">
    <property type="entry name" value="L3_bact"/>
    <property type="match status" value="1"/>
</dbReference>
<dbReference type="PANTHER" id="PTHR11229">
    <property type="entry name" value="50S RIBOSOMAL PROTEIN L3"/>
    <property type="match status" value="1"/>
</dbReference>
<dbReference type="PANTHER" id="PTHR11229:SF16">
    <property type="entry name" value="LARGE RIBOSOMAL SUBUNIT PROTEIN UL3C"/>
    <property type="match status" value="1"/>
</dbReference>
<dbReference type="Pfam" id="PF00297">
    <property type="entry name" value="Ribosomal_L3"/>
    <property type="match status" value="1"/>
</dbReference>
<dbReference type="SUPFAM" id="SSF50447">
    <property type="entry name" value="Translation proteins"/>
    <property type="match status" value="1"/>
</dbReference>
<dbReference type="PROSITE" id="PS00474">
    <property type="entry name" value="RIBOSOMAL_L3"/>
    <property type="match status" value="1"/>
</dbReference>
<feature type="chain" id="PRO_1000165867" description="Large ribosomal subunit protein uL3">
    <location>
        <begin position="1"/>
        <end position="210"/>
    </location>
</feature>
<feature type="region of interest" description="Disordered" evidence="2">
    <location>
        <begin position="125"/>
        <end position="151"/>
    </location>
</feature>
<name>RL3_BACCQ</name>